<reference key="1">
    <citation type="submission" date="2002-07" db="EMBL/GenBank/DDBJ databases">
        <title>A putative S-adenosylmethionine synthase cDNA clone from papaya (Carica papaya L. cv. eksotika).</title>
        <authorList>
            <person name="Kasazlinda J."/>
            <person name="Chong J.Y."/>
            <person name="Othman R."/>
            <person name="Ali Z.M."/>
            <person name="Lazan H."/>
        </authorList>
    </citation>
    <scope>NUCLEOTIDE SEQUENCE [MRNA]</scope>
    <source>
        <tissue>Mesocarp</tissue>
    </source>
</reference>
<gene>
    <name type="primary">SAMS</name>
</gene>
<name>METK_CARPA</name>
<comment type="function">
    <text evidence="5">Catalyzes the formation of S-adenosylmethionine from methionine and ATP. The reaction comprises two steps that are both catalyzed by the same enzyme: formation of S-adenosylmethionine (AdoMet) and triphosphate, and subsequent hydrolysis of the triphosphate.</text>
</comment>
<comment type="catalytic activity">
    <reaction evidence="5">
        <text>L-methionine + ATP + H2O = S-adenosyl-L-methionine + phosphate + diphosphate</text>
        <dbReference type="Rhea" id="RHEA:21080"/>
        <dbReference type="ChEBI" id="CHEBI:15377"/>
        <dbReference type="ChEBI" id="CHEBI:30616"/>
        <dbReference type="ChEBI" id="CHEBI:33019"/>
        <dbReference type="ChEBI" id="CHEBI:43474"/>
        <dbReference type="ChEBI" id="CHEBI:57844"/>
        <dbReference type="ChEBI" id="CHEBI:59789"/>
        <dbReference type="EC" id="2.5.1.6"/>
    </reaction>
</comment>
<comment type="cofactor">
    <cofactor evidence="5">
        <name>Mn(2+)</name>
        <dbReference type="ChEBI" id="CHEBI:29035"/>
    </cofactor>
    <cofactor evidence="5">
        <name>Mg(2+)</name>
        <dbReference type="ChEBI" id="CHEBI:18420"/>
    </cofactor>
    <cofactor evidence="5">
        <name>Co(2+)</name>
        <dbReference type="ChEBI" id="CHEBI:48828"/>
    </cofactor>
    <text evidence="3 5">Binds 2 divalent ions per subunit. The metal ions interact primarily with the substrate (By similarity). Can utilize magnesium, manganese or cobalt (in vitro) (By similarity).</text>
</comment>
<comment type="cofactor">
    <cofactor evidence="5">
        <name>K(+)</name>
        <dbReference type="ChEBI" id="CHEBI:29103"/>
    </cofactor>
    <text evidence="3">Binds 1 potassium ion per subunit. The potassium ion interacts primarily with the substrate (By similarity).</text>
</comment>
<comment type="pathway">
    <text evidence="5">Amino-acid biosynthesis; S-adenosyl-L-methionine biosynthesis; S-adenosyl-L-methionine from L-methionine: step 1/1.</text>
</comment>
<comment type="subunit">
    <text evidence="1">Homotetramer.</text>
</comment>
<comment type="subcellular location">
    <subcellularLocation>
        <location evidence="1">Cytoplasm</location>
    </subcellularLocation>
</comment>
<comment type="similarity">
    <text evidence="6">Belongs to the AdoMet synthase family.</text>
</comment>
<proteinExistence type="evidence at transcript level"/>
<evidence type="ECO:0000250" key="1"/>
<evidence type="ECO:0000250" key="2">
    <source>
        <dbReference type="UniProtKB" id="P0A817"/>
    </source>
</evidence>
<evidence type="ECO:0000250" key="3">
    <source>
        <dbReference type="UniProtKB" id="P13444"/>
    </source>
</evidence>
<evidence type="ECO:0000250" key="4">
    <source>
        <dbReference type="UniProtKB" id="Q00266"/>
    </source>
</evidence>
<evidence type="ECO:0000250" key="5">
    <source>
        <dbReference type="UniProtKB" id="Q96551"/>
    </source>
</evidence>
<evidence type="ECO:0000305" key="6"/>
<sequence length="429" mass="47086">METFLFTSESVNEGHPDKLCDQISDAVLDACLAQDPDSKVACETCTKTNMVMVFGEITTKADVDYEKIVRDTCRSIGFVSDDVGLDADKCKVLVNIEQQSPDIAQGVHGHFTKRPEEIGAGDQGHMFGYATDETPEFMPLSHVLATKLGARLTEVRKNGTCPWLRPDGKTQVTVEYYNENGARVPVRVHTVLISTQHDETVTNDEIAADLKEHVIKPVIPEKYLDEKTIFHLNPSGRFVIGGPHGDAGLTGRKIIIDTYGGWGAHGGGAFSGKDPTKVDRSGAYIVRQAAKSIVANGLARRCIVQVSYAIGVPEPLSVYVDTYGTGKIPDKEILKIVKENFDFRPGMITINLDLKRGGNSRFLKTAAYGHFGRDDPDFTWEVVKPSSGRSLNLKVLVVIIPACFIELIIGCLMLMLNSPYSIEVSYMMI</sequence>
<accession>Q8GTL5</accession>
<organism>
    <name type="scientific">Carica papaya</name>
    <name type="common">Papaya</name>
    <dbReference type="NCBI Taxonomy" id="3649"/>
    <lineage>
        <taxon>Eukaryota</taxon>
        <taxon>Viridiplantae</taxon>
        <taxon>Streptophyta</taxon>
        <taxon>Embryophyta</taxon>
        <taxon>Tracheophyta</taxon>
        <taxon>Spermatophyta</taxon>
        <taxon>Magnoliopsida</taxon>
        <taxon>eudicotyledons</taxon>
        <taxon>Gunneridae</taxon>
        <taxon>Pentapetalae</taxon>
        <taxon>rosids</taxon>
        <taxon>malvids</taxon>
        <taxon>Brassicales</taxon>
        <taxon>Caricaceae</taxon>
        <taxon>Carica</taxon>
    </lineage>
</organism>
<feature type="chain" id="PRO_0000363017" description="S-adenosylmethionine synthase">
    <location>
        <begin position="1"/>
        <end position="429"/>
    </location>
</feature>
<feature type="binding site" evidence="3">
    <location>
        <position position="9"/>
    </location>
    <ligand>
        <name>Mg(2+)</name>
        <dbReference type="ChEBI" id="CHEBI:18420"/>
    </ligand>
</feature>
<feature type="binding site" description="in other chain" evidence="4">
    <location>
        <position position="15"/>
    </location>
    <ligand>
        <name>ATP</name>
        <dbReference type="ChEBI" id="CHEBI:30616"/>
        <note>ligand shared between two neighboring subunits</note>
    </ligand>
</feature>
<feature type="binding site" evidence="2">
    <location>
        <position position="43"/>
    </location>
    <ligand>
        <name>K(+)</name>
        <dbReference type="ChEBI" id="CHEBI:29103"/>
    </ligand>
</feature>
<feature type="binding site" description="in other chain" evidence="2">
    <location>
        <position position="56"/>
    </location>
    <ligand>
        <name>L-methionine</name>
        <dbReference type="ChEBI" id="CHEBI:57844"/>
        <note>ligand shared between two neighboring subunits</note>
    </ligand>
</feature>
<feature type="binding site" description="in other chain" evidence="2">
    <location>
        <position position="99"/>
    </location>
    <ligand>
        <name>L-methionine</name>
        <dbReference type="ChEBI" id="CHEBI:57844"/>
        <note>ligand shared between two neighboring subunits</note>
    </ligand>
</feature>
<feature type="binding site" description="in other chain" evidence="4">
    <location>
        <begin position="167"/>
        <end position="169"/>
    </location>
    <ligand>
        <name>ATP</name>
        <dbReference type="ChEBI" id="CHEBI:30616"/>
        <note>ligand shared between two neighboring subunits</note>
    </ligand>
</feature>
<feature type="binding site" description="in other chain" evidence="4">
    <location>
        <begin position="235"/>
        <end position="238"/>
    </location>
    <ligand>
        <name>ATP</name>
        <dbReference type="ChEBI" id="CHEBI:30616"/>
        <note>ligand shared between two neighboring subunits</note>
    </ligand>
</feature>
<feature type="binding site" description="in other chain" evidence="4">
    <location>
        <position position="246"/>
    </location>
    <ligand>
        <name>ATP</name>
        <dbReference type="ChEBI" id="CHEBI:30616"/>
        <note>ligand shared between two neighboring subunits</note>
    </ligand>
</feature>
<feature type="binding site" evidence="2">
    <location>
        <position position="246"/>
    </location>
    <ligand>
        <name>L-methionine</name>
        <dbReference type="ChEBI" id="CHEBI:57844"/>
        <note>ligand shared between two neighboring subunits</note>
    </ligand>
</feature>
<feature type="binding site" description="in other chain" evidence="2">
    <location>
        <begin position="252"/>
        <end position="253"/>
    </location>
    <ligand>
        <name>ATP</name>
        <dbReference type="ChEBI" id="CHEBI:30616"/>
        <note>ligand shared between two neighboring subunits</note>
    </ligand>
</feature>
<feature type="binding site" evidence="2">
    <location>
        <position position="269"/>
    </location>
    <ligand>
        <name>ATP</name>
        <dbReference type="ChEBI" id="CHEBI:30616"/>
        <note>ligand shared between two neighboring subunits</note>
    </ligand>
</feature>
<feature type="binding site" evidence="2">
    <location>
        <position position="273"/>
    </location>
    <ligand>
        <name>ATP</name>
        <dbReference type="ChEBI" id="CHEBI:30616"/>
        <note>ligand shared between two neighboring subunits</note>
    </ligand>
</feature>
<feature type="binding site" evidence="3">
    <location>
        <position position="277"/>
    </location>
    <ligand>
        <name>ATP</name>
        <dbReference type="ChEBI" id="CHEBI:30616"/>
        <note>ligand shared between two neighboring subunits</note>
    </ligand>
</feature>
<feature type="binding site" description="in other chain" evidence="2">
    <location>
        <position position="277"/>
    </location>
    <ligand>
        <name>L-methionine</name>
        <dbReference type="ChEBI" id="CHEBI:57844"/>
        <note>ligand shared between two neighboring subunits</note>
    </ligand>
</feature>
<dbReference type="EC" id="2.5.1.6" evidence="5"/>
<dbReference type="EMBL" id="AF531479">
    <property type="protein sequence ID" value="AAN07179.1"/>
    <property type="molecule type" value="mRNA"/>
</dbReference>
<dbReference type="SMR" id="Q8GTL5"/>
<dbReference type="UniPathway" id="UPA00315">
    <property type="reaction ID" value="UER00080"/>
</dbReference>
<dbReference type="GO" id="GO:0005737">
    <property type="term" value="C:cytoplasm"/>
    <property type="evidence" value="ECO:0007669"/>
    <property type="project" value="UniProtKB-SubCell"/>
</dbReference>
<dbReference type="GO" id="GO:0005524">
    <property type="term" value="F:ATP binding"/>
    <property type="evidence" value="ECO:0007669"/>
    <property type="project" value="UniProtKB-KW"/>
</dbReference>
<dbReference type="GO" id="GO:0046872">
    <property type="term" value="F:metal ion binding"/>
    <property type="evidence" value="ECO:0007669"/>
    <property type="project" value="UniProtKB-KW"/>
</dbReference>
<dbReference type="GO" id="GO:0004478">
    <property type="term" value="F:methionine adenosyltransferase activity"/>
    <property type="evidence" value="ECO:0007669"/>
    <property type="project" value="UniProtKB-EC"/>
</dbReference>
<dbReference type="GO" id="GO:0006730">
    <property type="term" value="P:one-carbon metabolic process"/>
    <property type="evidence" value="ECO:0007669"/>
    <property type="project" value="UniProtKB-KW"/>
</dbReference>
<dbReference type="GO" id="GO:0006556">
    <property type="term" value="P:S-adenosylmethionine biosynthetic process"/>
    <property type="evidence" value="ECO:0007669"/>
    <property type="project" value="UniProtKB-UniPathway"/>
</dbReference>
<dbReference type="CDD" id="cd18079">
    <property type="entry name" value="S-AdoMet_synt"/>
    <property type="match status" value="1"/>
</dbReference>
<dbReference type="FunFam" id="3.30.300.10:FF:000003">
    <property type="entry name" value="S-adenosylmethionine synthase"/>
    <property type="match status" value="1"/>
</dbReference>
<dbReference type="FunFam" id="3.30.300.10:FF:000004">
    <property type="entry name" value="S-adenosylmethionine synthase"/>
    <property type="match status" value="1"/>
</dbReference>
<dbReference type="FunFam" id="3.30.300.10:FF:000011">
    <property type="entry name" value="S-adenosylmethionine synthase"/>
    <property type="match status" value="1"/>
</dbReference>
<dbReference type="FunFam" id="3.30.300.10:FF:000021">
    <property type="entry name" value="S-adenosylmethionine synthetase 1"/>
    <property type="match status" value="1"/>
</dbReference>
<dbReference type="Gene3D" id="3.30.300.10">
    <property type="match status" value="3"/>
</dbReference>
<dbReference type="HAMAP" id="MF_00086">
    <property type="entry name" value="S_AdoMet_synth1"/>
    <property type="match status" value="1"/>
</dbReference>
<dbReference type="InterPro" id="IPR022631">
    <property type="entry name" value="ADOMET_SYNTHASE_CS"/>
</dbReference>
<dbReference type="InterPro" id="IPR022630">
    <property type="entry name" value="S-AdoMet_synt_C"/>
</dbReference>
<dbReference type="InterPro" id="IPR022629">
    <property type="entry name" value="S-AdoMet_synt_central"/>
</dbReference>
<dbReference type="InterPro" id="IPR022628">
    <property type="entry name" value="S-AdoMet_synt_N"/>
</dbReference>
<dbReference type="InterPro" id="IPR002133">
    <property type="entry name" value="S-AdoMet_synthetase"/>
</dbReference>
<dbReference type="InterPro" id="IPR022636">
    <property type="entry name" value="S-AdoMet_synthetase_sfam"/>
</dbReference>
<dbReference type="NCBIfam" id="TIGR01034">
    <property type="entry name" value="metK"/>
    <property type="match status" value="1"/>
</dbReference>
<dbReference type="PANTHER" id="PTHR11964">
    <property type="entry name" value="S-ADENOSYLMETHIONINE SYNTHETASE"/>
    <property type="match status" value="1"/>
</dbReference>
<dbReference type="Pfam" id="PF02773">
    <property type="entry name" value="S-AdoMet_synt_C"/>
    <property type="match status" value="1"/>
</dbReference>
<dbReference type="Pfam" id="PF02772">
    <property type="entry name" value="S-AdoMet_synt_M"/>
    <property type="match status" value="1"/>
</dbReference>
<dbReference type="Pfam" id="PF00438">
    <property type="entry name" value="S-AdoMet_synt_N"/>
    <property type="match status" value="1"/>
</dbReference>
<dbReference type="PIRSF" id="PIRSF000497">
    <property type="entry name" value="MAT"/>
    <property type="match status" value="1"/>
</dbReference>
<dbReference type="SUPFAM" id="SSF55973">
    <property type="entry name" value="S-adenosylmethionine synthetase"/>
    <property type="match status" value="3"/>
</dbReference>
<dbReference type="PROSITE" id="PS00376">
    <property type="entry name" value="ADOMET_SYNTHASE_1"/>
    <property type="match status" value="1"/>
</dbReference>
<dbReference type="PROSITE" id="PS00377">
    <property type="entry name" value="ADOMET_SYNTHASE_2"/>
    <property type="match status" value="1"/>
</dbReference>
<protein>
    <recommendedName>
        <fullName>S-adenosylmethionine synthase</fullName>
        <shortName>AdoMet synthase</shortName>
        <ecNumber evidence="5">2.5.1.6</ecNumber>
    </recommendedName>
    <alternativeName>
        <fullName>Methionine adenosyltransferase</fullName>
        <shortName>MAT</shortName>
    </alternativeName>
</protein>
<keyword id="KW-0067">ATP-binding</keyword>
<keyword id="KW-0170">Cobalt</keyword>
<keyword id="KW-0963">Cytoplasm</keyword>
<keyword id="KW-0460">Magnesium</keyword>
<keyword id="KW-0479">Metal-binding</keyword>
<keyword id="KW-0547">Nucleotide-binding</keyword>
<keyword id="KW-0554">One-carbon metabolism</keyword>
<keyword id="KW-0630">Potassium</keyword>
<keyword id="KW-0808">Transferase</keyword>